<keyword id="KW-0067">ATP-binding</keyword>
<keyword id="KW-0963">Cytoplasm</keyword>
<keyword id="KW-0436">Ligase</keyword>
<keyword id="KW-0547">Nucleotide-binding</keyword>
<organism>
    <name type="scientific">Escherichia coli O17:K52:H18 (strain UMN026 / ExPEC)</name>
    <dbReference type="NCBI Taxonomy" id="585056"/>
    <lineage>
        <taxon>Bacteria</taxon>
        <taxon>Pseudomonadati</taxon>
        <taxon>Pseudomonadota</taxon>
        <taxon>Gammaproteobacteria</taxon>
        <taxon>Enterobacterales</taxon>
        <taxon>Enterobacteriaceae</taxon>
        <taxon>Escherichia</taxon>
    </lineage>
</organism>
<evidence type="ECO:0000255" key="1">
    <source>
        <dbReference type="HAMAP-Rule" id="MF_00200"/>
    </source>
</evidence>
<reference key="1">
    <citation type="journal article" date="2009" name="PLoS Genet.">
        <title>Organised genome dynamics in the Escherichia coli species results in highly diverse adaptive paths.</title>
        <authorList>
            <person name="Touchon M."/>
            <person name="Hoede C."/>
            <person name="Tenaillon O."/>
            <person name="Barbe V."/>
            <person name="Baeriswyl S."/>
            <person name="Bidet P."/>
            <person name="Bingen E."/>
            <person name="Bonacorsi S."/>
            <person name="Bouchier C."/>
            <person name="Bouvet O."/>
            <person name="Calteau A."/>
            <person name="Chiapello H."/>
            <person name="Clermont O."/>
            <person name="Cruveiller S."/>
            <person name="Danchin A."/>
            <person name="Diard M."/>
            <person name="Dossat C."/>
            <person name="Karoui M.E."/>
            <person name="Frapy E."/>
            <person name="Garry L."/>
            <person name="Ghigo J.M."/>
            <person name="Gilles A.M."/>
            <person name="Johnson J."/>
            <person name="Le Bouguenec C."/>
            <person name="Lescat M."/>
            <person name="Mangenot S."/>
            <person name="Martinez-Jehanne V."/>
            <person name="Matic I."/>
            <person name="Nassif X."/>
            <person name="Oztas S."/>
            <person name="Petit M.A."/>
            <person name="Pichon C."/>
            <person name="Rouy Z."/>
            <person name="Ruf C.S."/>
            <person name="Schneider D."/>
            <person name="Tourret J."/>
            <person name="Vacherie B."/>
            <person name="Vallenet D."/>
            <person name="Medigue C."/>
            <person name="Rocha E.P.C."/>
            <person name="Denamur E."/>
        </authorList>
    </citation>
    <scope>NUCLEOTIDE SEQUENCE [LARGE SCALE GENOMIC DNA]</scope>
    <source>
        <strain>UMN026 / ExPEC</strain>
    </source>
</reference>
<feature type="chain" id="PRO_1000195098" description="RNA 3'-terminal phosphate cyclase">
    <location>
        <begin position="1"/>
        <end position="338"/>
    </location>
</feature>
<feature type="active site" description="Tele-AMP-histidine intermediate" evidence="1">
    <location>
        <position position="308"/>
    </location>
</feature>
<feature type="binding site" evidence="1">
    <location>
        <position position="103"/>
    </location>
    <ligand>
        <name>ATP</name>
        <dbReference type="ChEBI" id="CHEBI:30616"/>
    </ligand>
</feature>
<feature type="binding site" evidence="1">
    <location>
        <begin position="283"/>
        <end position="287"/>
    </location>
    <ligand>
        <name>ATP</name>
        <dbReference type="ChEBI" id="CHEBI:30616"/>
    </ligand>
</feature>
<protein>
    <recommendedName>
        <fullName evidence="1">RNA 3'-terminal phosphate cyclase</fullName>
        <shortName evidence="1">RNA cyclase</shortName>
        <shortName evidence="1">RNA-3'-phosphate cyclase</shortName>
        <ecNumber evidence="1">6.5.1.4</ecNumber>
    </recommendedName>
</protein>
<comment type="function">
    <text evidence="1">Catalyzes the conversion of 3'-phosphate to a 2',3'-cyclic phosphodiester at the end of RNA. The mechanism of action of the enzyme occurs in 3 steps: (A) adenylation of the enzyme by ATP; (B) transfer of adenylate to an RNA-N3'P to produce RNA-N3'PP5'A; (C) and attack of the adjacent 2'-hydroxyl on the 3'-phosphorus in the diester linkage to produce the cyclic end product. The biological role of this enzyme is unknown but it is likely to function in some aspects of cellular RNA processing.</text>
</comment>
<comment type="catalytic activity">
    <reaction evidence="1">
        <text>a 3'-end 3'-phospho-ribonucleotide-RNA + ATP = a 3'-end 2',3'-cyclophospho-ribonucleotide-RNA + AMP + diphosphate</text>
        <dbReference type="Rhea" id="RHEA:23976"/>
        <dbReference type="Rhea" id="RHEA-COMP:10463"/>
        <dbReference type="Rhea" id="RHEA-COMP:10464"/>
        <dbReference type="ChEBI" id="CHEBI:30616"/>
        <dbReference type="ChEBI" id="CHEBI:33019"/>
        <dbReference type="ChEBI" id="CHEBI:83062"/>
        <dbReference type="ChEBI" id="CHEBI:83064"/>
        <dbReference type="ChEBI" id="CHEBI:456215"/>
        <dbReference type="EC" id="6.5.1.4"/>
    </reaction>
</comment>
<comment type="subcellular location">
    <subcellularLocation>
        <location evidence="1">Cytoplasm</location>
    </subcellularLocation>
</comment>
<comment type="similarity">
    <text evidence="1">Belongs to the RNA 3'-terminal cyclase family. Type 1 subfamily.</text>
</comment>
<accession>B7NE24</accession>
<proteinExistence type="inferred from homology"/>
<sequence length="338" mass="36108">MKRMIALDGAQGEGGGQILRSALSLSMITGQPFTITDIRAGRAKPGLLRQHLTAVKAATEICRATVEGAELRAQRLIFRPGTVRGGDYRFAIGSAGSSTLVLQTVLPALWFADGPSRVEVSGGTDNPSAPPADFIRRVLEPLLAKMGIHQQTTLLRHGFYPAGGGVVATEVSPVALFNTLQLGERGNIVQMRGEVLLAGVPRHVAEREIATLAGSFSLHEQNIHNLPRDQGPGNTVSLEVESENITERFFVVGEKRISAEVVAAQLVKEVKRYLASPAAVGEYLADQLVLPMALAGAGEFTVAHPSCHLLTNIAVVERFLPVRFSLVEADGVTRVSIE</sequence>
<gene>
    <name evidence="1" type="primary">rtcA</name>
    <name type="ordered locus">ECUMN_3878</name>
</gene>
<name>RTCA_ECOLU</name>
<dbReference type="EC" id="6.5.1.4" evidence="1"/>
<dbReference type="EMBL" id="CU928163">
    <property type="protein sequence ID" value="CAR15024.1"/>
    <property type="molecule type" value="Genomic_DNA"/>
</dbReference>
<dbReference type="RefSeq" id="WP_001306323.1">
    <property type="nucleotide sequence ID" value="NC_011751.1"/>
</dbReference>
<dbReference type="RefSeq" id="YP_002414529.1">
    <property type="nucleotide sequence ID" value="NC_011751.1"/>
</dbReference>
<dbReference type="SMR" id="B7NE24"/>
<dbReference type="STRING" id="585056.ECUMN_3878"/>
<dbReference type="KEGG" id="eum:ECUMN_3878"/>
<dbReference type="PATRIC" id="fig|585056.7.peg.4052"/>
<dbReference type="HOGENOM" id="CLU_027882_0_0_6"/>
<dbReference type="Proteomes" id="UP000007097">
    <property type="component" value="Chromosome"/>
</dbReference>
<dbReference type="GO" id="GO:0005737">
    <property type="term" value="C:cytoplasm"/>
    <property type="evidence" value="ECO:0007669"/>
    <property type="project" value="UniProtKB-SubCell"/>
</dbReference>
<dbReference type="GO" id="GO:0005524">
    <property type="term" value="F:ATP binding"/>
    <property type="evidence" value="ECO:0007669"/>
    <property type="project" value="UniProtKB-KW"/>
</dbReference>
<dbReference type="GO" id="GO:0003963">
    <property type="term" value="F:RNA-3'-phosphate cyclase activity"/>
    <property type="evidence" value="ECO:0007669"/>
    <property type="project" value="UniProtKB-UniRule"/>
</dbReference>
<dbReference type="GO" id="GO:0006396">
    <property type="term" value="P:RNA processing"/>
    <property type="evidence" value="ECO:0007669"/>
    <property type="project" value="InterPro"/>
</dbReference>
<dbReference type="FunFam" id="3.65.10.20:FF:000002">
    <property type="entry name" value="GM19193"/>
    <property type="match status" value="1"/>
</dbReference>
<dbReference type="FunFam" id="3.30.360.20:FF:000003">
    <property type="entry name" value="RNA 3'-terminal phosphate cyclase"/>
    <property type="match status" value="1"/>
</dbReference>
<dbReference type="Gene3D" id="3.65.10.20">
    <property type="entry name" value="RNA 3'-terminal phosphate cyclase domain"/>
    <property type="match status" value="1"/>
</dbReference>
<dbReference type="Gene3D" id="3.30.360.20">
    <property type="entry name" value="RNA 3'-terminal phosphate cyclase, insert domain"/>
    <property type="match status" value="1"/>
</dbReference>
<dbReference type="HAMAP" id="MF_00200">
    <property type="entry name" value="RTC"/>
    <property type="match status" value="1"/>
</dbReference>
<dbReference type="InterPro" id="IPR013791">
    <property type="entry name" value="RNA3'-term_phos_cycl_insert"/>
</dbReference>
<dbReference type="InterPro" id="IPR023797">
    <property type="entry name" value="RNA3'_phos_cyclase_dom"/>
</dbReference>
<dbReference type="InterPro" id="IPR037136">
    <property type="entry name" value="RNA3'_phos_cyclase_dom_sf"/>
</dbReference>
<dbReference type="InterPro" id="IPR000228">
    <property type="entry name" value="RNA3'_term_phos_cyc"/>
</dbReference>
<dbReference type="InterPro" id="IPR017770">
    <property type="entry name" value="RNA3'_term_phos_cyc_type_1"/>
</dbReference>
<dbReference type="InterPro" id="IPR020719">
    <property type="entry name" value="RNA3'_term_phos_cycl-like_CS"/>
</dbReference>
<dbReference type="InterPro" id="IPR013792">
    <property type="entry name" value="RNA3'P_cycl/enolpyr_Trfase_a/b"/>
</dbReference>
<dbReference type="InterPro" id="IPR036553">
    <property type="entry name" value="RPTC_insert"/>
</dbReference>
<dbReference type="NCBIfam" id="NF003246">
    <property type="entry name" value="PRK04204.1-2"/>
    <property type="match status" value="1"/>
</dbReference>
<dbReference type="NCBIfam" id="NF003247">
    <property type="entry name" value="PRK04204.1-3"/>
    <property type="match status" value="1"/>
</dbReference>
<dbReference type="NCBIfam" id="TIGR03399">
    <property type="entry name" value="RNA_3prim_cycl"/>
    <property type="match status" value="1"/>
</dbReference>
<dbReference type="PANTHER" id="PTHR11096">
    <property type="entry name" value="RNA 3' TERMINAL PHOSPHATE CYCLASE"/>
    <property type="match status" value="1"/>
</dbReference>
<dbReference type="PANTHER" id="PTHR11096:SF0">
    <property type="entry name" value="RNA 3'-TERMINAL PHOSPHATE CYCLASE"/>
    <property type="match status" value="1"/>
</dbReference>
<dbReference type="Pfam" id="PF01137">
    <property type="entry name" value="RTC"/>
    <property type="match status" value="1"/>
</dbReference>
<dbReference type="Pfam" id="PF05189">
    <property type="entry name" value="RTC_insert"/>
    <property type="match status" value="1"/>
</dbReference>
<dbReference type="PIRSF" id="PIRSF005378">
    <property type="entry name" value="RNA3'_term_phos_cycl_euk"/>
    <property type="match status" value="1"/>
</dbReference>
<dbReference type="SUPFAM" id="SSF55205">
    <property type="entry name" value="EPT/RTPC-like"/>
    <property type="match status" value="2"/>
</dbReference>
<dbReference type="SUPFAM" id="SSF52913">
    <property type="entry name" value="RNA 3'-terminal phosphate cyclase, RPTC, insert domain"/>
    <property type="match status" value="1"/>
</dbReference>
<dbReference type="PROSITE" id="PS01287">
    <property type="entry name" value="RTC"/>
    <property type="match status" value="1"/>
</dbReference>